<reference key="1">
    <citation type="journal article" date="2008" name="J. Bacteriol.">
        <title>The complete genome sequence of Escherichia coli DH10B: insights into the biology of a laboratory workhorse.</title>
        <authorList>
            <person name="Durfee T."/>
            <person name="Nelson R."/>
            <person name="Baldwin S."/>
            <person name="Plunkett G. III"/>
            <person name="Burland V."/>
            <person name="Mau B."/>
            <person name="Petrosino J.F."/>
            <person name="Qin X."/>
            <person name="Muzny D.M."/>
            <person name="Ayele M."/>
            <person name="Gibbs R.A."/>
            <person name="Csorgo B."/>
            <person name="Posfai G."/>
            <person name="Weinstock G.M."/>
            <person name="Blattner F.R."/>
        </authorList>
    </citation>
    <scope>NUCLEOTIDE SEQUENCE [LARGE SCALE GENOMIC DNA]</scope>
    <source>
        <strain>K12 / DH10B</strain>
    </source>
</reference>
<evidence type="ECO:0000255" key="1">
    <source>
        <dbReference type="HAMAP-Rule" id="MF_00151"/>
    </source>
</evidence>
<dbReference type="EC" id="2.7.7.3" evidence="1"/>
<dbReference type="EMBL" id="CP000948">
    <property type="protein sequence ID" value="ACB04684.1"/>
    <property type="molecule type" value="Genomic_DNA"/>
</dbReference>
<dbReference type="RefSeq" id="WP_001171866.1">
    <property type="nucleotide sequence ID" value="NC_010473.1"/>
</dbReference>
<dbReference type="SMR" id="B1X968"/>
<dbReference type="GeneID" id="75202203"/>
<dbReference type="KEGG" id="ecd:ECDH10B_3816"/>
<dbReference type="HOGENOM" id="CLU_100149_0_1_6"/>
<dbReference type="UniPathway" id="UPA00241">
    <property type="reaction ID" value="UER00355"/>
</dbReference>
<dbReference type="GO" id="GO:0005737">
    <property type="term" value="C:cytoplasm"/>
    <property type="evidence" value="ECO:0007669"/>
    <property type="project" value="UniProtKB-SubCell"/>
</dbReference>
<dbReference type="GO" id="GO:0005524">
    <property type="term" value="F:ATP binding"/>
    <property type="evidence" value="ECO:0007669"/>
    <property type="project" value="UniProtKB-KW"/>
</dbReference>
<dbReference type="GO" id="GO:0004595">
    <property type="term" value="F:pantetheine-phosphate adenylyltransferase activity"/>
    <property type="evidence" value="ECO:0007669"/>
    <property type="project" value="UniProtKB-UniRule"/>
</dbReference>
<dbReference type="GO" id="GO:0015937">
    <property type="term" value="P:coenzyme A biosynthetic process"/>
    <property type="evidence" value="ECO:0007669"/>
    <property type="project" value="UniProtKB-UniRule"/>
</dbReference>
<dbReference type="CDD" id="cd02163">
    <property type="entry name" value="PPAT"/>
    <property type="match status" value="1"/>
</dbReference>
<dbReference type="FunFam" id="3.40.50.620:FF:000012">
    <property type="entry name" value="Phosphopantetheine adenylyltransferase"/>
    <property type="match status" value="1"/>
</dbReference>
<dbReference type="Gene3D" id="3.40.50.620">
    <property type="entry name" value="HUPs"/>
    <property type="match status" value="1"/>
</dbReference>
<dbReference type="HAMAP" id="MF_00151">
    <property type="entry name" value="PPAT_bact"/>
    <property type="match status" value="1"/>
</dbReference>
<dbReference type="InterPro" id="IPR004821">
    <property type="entry name" value="Cyt_trans-like"/>
</dbReference>
<dbReference type="InterPro" id="IPR001980">
    <property type="entry name" value="PPAT"/>
</dbReference>
<dbReference type="InterPro" id="IPR014729">
    <property type="entry name" value="Rossmann-like_a/b/a_fold"/>
</dbReference>
<dbReference type="NCBIfam" id="TIGR01510">
    <property type="entry name" value="coaD_prev_kdtB"/>
    <property type="match status" value="1"/>
</dbReference>
<dbReference type="NCBIfam" id="TIGR00125">
    <property type="entry name" value="cyt_tran_rel"/>
    <property type="match status" value="1"/>
</dbReference>
<dbReference type="PANTHER" id="PTHR21342">
    <property type="entry name" value="PHOSPHOPANTETHEINE ADENYLYLTRANSFERASE"/>
    <property type="match status" value="1"/>
</dbReference>
<dbReference type="PANTHER" id="PTHR21342:SF1">
    <property type="entry name" value="PHOSPHOPANTETHEINE ADENYLYLTRANSFERASE"/>
    <property type="match status" value="1"/>
</dbReference>
<dbReference type="Pfam" id="PF01467">
    <property type="entry name" value="CTP_transf_like"/>
    <property type="match status" value="1"/>
</dbReference>
<dbReference type="PRINTS" id="PR01020">
    <property type="entry name" value="LPSBIOSNTHSS"/>
</dbReference>
<dbReference type="SUPFAM" id="SSF52374">
    <property type="entry name" value="Nucleotidylyl transferase"/>
    <property type="match status" value="1"/>
</dbReference>
<protein>
    <recommendedName>
        <fullName evidence="1">Phosphopantetheine adenylyltransferase</fullName>
        <ecNumber evidence="1">2.7.7.3</ecNumber>
    </recommendedName>
    <alternativeName>
        <fullName evidence="1">Dephospho-CoA pyrophosphorylase</fullName>
    </alternativeName>
    <alternativeName>
        <fullName evidence="1">Pantetheine-phosphate adenylyltransferase</fullName>
        <shortName evidence="1">PPAT</shortName>
    </alternativeName>
</protein>
<feature type="chain" id="PRO_1000096790" description="Phosphopantetheine adenylyltransferase">
    <location>
        <begin position="1"/>
        <end position="159"/>
    </location>
</feature>
<feature type="binding site" evidence="1">
    <location>
        <begin position="10"/>
        <end position="11"/>
    </location>
    <ligand>
        <name>ATP</name>
        <dbReference type="ChEBI" id="CHEBI:30616"/>
    </ligand>
</feature>
<feature type="binding site" evidence="1">
    <location>
        <position position="10"/>
    </location>
    <ligand>
        <name>substrate</name>
    </ligand>
</feature>
<feature type="binding site" evidence="1">
    <location>
        <position position="18"/>
    </location>
    <ligand>
        <name>ATP</name>
        <dbReference type="ChEBI" id="CHEBI:30616"/>
    </ligand>
</feature>
<feature type="binding site" evidence="1">
    <location>
        <position position="42"/>
    </location>
    <ligand>
        <name>substrate</name>
    </ligand>
</feature>
<feature type="binding site" evidence="1">
    <location>
        <position position="74"/>
    </location>
    <ligand>
        <name>substrate</name>
    </ligand>
</feature>
<feature type="binding site" evidence="1">
    <location>
        <position position="88"/>
    </location>
    <ligand>
        <name>substrate</name>
    </ligand>
</feature>
<feature type="binding site" evidence="1">
    <location>
        <begin position="89"/>
        <end position="91"/>
    </location>
    <ligand>
        <name>ATP</name>
        <dbReference type="ChEBI" id="CHEBI:30616"/>
    </ligand>
</feature>
<feature type="binding site" evidence="1">
    <location>
        <position position="99"/>
    </location>
    <ligand>
        <name>ATP</name>
        <dbReference type="ChEBI" id="CHEBI:30616"/>
    </ligand>
</feature>
<feature type="binding site" evidence="1">
    <location>
        <begin position="124"/>
        <end position="130"/>
    </location>
    <ligand>
        <name>ATP</name>
        <dbReference type="ChEBI" id="CHEBI:30616"/>
    </ligand>
</feature>
<feature type="site" description="Transition state stabilizer" evidence="1">
    <location>
        <position position="18"/>
    </location>
</feature>
<sequence>MQKRAIYPGTFDPITNGHIDIVTRATQMFDHVILAIAASPSKKPMFTLEERVALAQQATAHLGNVEVVGFSDLMANFARNQHATVLIRGLRAVADFEYEMQLAHMNRHLMPELESVFLMPSKEWSFISSSLVKEVARHQGDVTHFLPENVHQALMAKLA</sequence>
<comment type="function">
    <text evidence="1">Reversibly transfers an adenylyl group from ATP to 4'-phosphopantetheine, yielding dephospho-CoA (dPCoA) and pyrophosphate.</text>
</comment>
<comment type="catalytic activity">
    <reaction evidence="1">
        <text>(R)-4'-phosphopantetheine + ATP + H(+) = 3'-dephospho-CoA + diphosphate</text>
        <dbReference type="Rhea" id="RHEA:19801"/>
        <dbReference type="ChEBI" id="CHEBI:15378"/>
        <dbReference type="ChEBI" id="CHEBI:30616"/>
        <dbReference type="ChEBI" id="CHEBI:33019"/>
        <dbReference type="ChEBI" id="CHEBI:57328"/>
        <dbReference type="ChEBI" id="CHEBI:61723"/>
        <dbReference type="EC" id="2.7.7.3"/>
    </reaction>
</comment>
<comment type="cofactor">
    <cofactor evidence="1">
        <name>Mg(2+)</name>
        <dbReference type="ChEBI" id="CHEBI:18420"/>
    </cofactor>
</comment>
<comment type="pathway">
    <text evidence="1">Cofactor biosynthesis; coenzyme A biosynthesis; CoA from (R)-pantothenate: step 4/5.</text>
</comment>
<comment type="subunit">
    <text evidence="1">Homohexamer.</text>
</comment>
<comment type="subcellular location">
    <subcellularLocation>
        <location evidence="1">Cytoplasm</location>
    </subcellularLocation>
</comment>
<comment type="similarity">
    <text evidence="1">Belongs to the bacterial CoaD family.</text>
</comment>
<proteinExistence type="inferred from homology"/>
<name>COAD_ECODH</name>
<accession>B1X968</accession>
<organism>
    <name type="scientific">Escherichia coli (strain K12 / DH10B)</name>
    <dbReference type="NCBI Taxonomy" id="316385"/>
    <lineage>
        <taxon>Bacteria</taxon>
        <taxon>Pseudomonadati</taxon>
        <taxon>Pseudomonadota</taxon>
        <taxon>Gammaproteobacteria</taxon>
        <taxon>Enterobacterales</taxon>
        <taxon>Enterobacteriaceae</taxon>
        <taxon>Escherichia</taxon>
    </lineage>
</organism>
<keyword id="KW-0067">ATP-binding</keyword>
<keyword id="KW-0173">Coenzyme A biosynthesis</keyword>
<keyword id="KW-0963">Cytoplasm</keyword>
<keyword id="KW-0460">Magnesium</keyword>
<keyword id="KW-0547">Nucleotide-binding</keyword>
<keyword id="KW-0548">Nucleotidyltransferase</keyword>
<keyword id="KW-0808">Transferase</keyword>
<gene>
    <name evidence="1" type="primary">coaD</name>
    <name type="ordered locus">ECDH10B_3816</name>
</gene>